<keyword id="KW-0997">Cell inner membrane</keyword>
<keyword id="KW-1003">Cell membrane</keyword>
<keyword id="KW-0406">Ion transport</keyword>
<keyword id="KW-0472">Membrane</keyword>
<keyword id="KW-0614">Plasmid</keyword>
<keyword id="KW-0630">Potassium</keyword>
<keyword id="KW-0633">Potassium transport</keyword>
<keyword id="KW-0769">Symport</keyword>
<keyword id="KW-0812">Transmembrane</keyword>
<keyword id="KW-1133">Transmembrane helix</keyword>
<keyword id="KW-0813">Transport</keyword>
<reference key="1">
    <citation type="journal article" date="2006" name="Genome Biol.">
        <title>The genome of Rhizobium leguminosarum has recognizable core and accessory components.</title>
        <authorList>
            <person name="Young J.P.W."/>
            <person name="Crossman L.C."/>
            <person name="Johnston A.W.B."/>
            <person name="Thomson N.R."/>
            <person name="Ghazoui Z.F."/>
            <person name="Hull K.H."/>
            <person name="Wexler M."/>
            <person name="Curson A.R.J."/>
            <person name="Todd J.D."/>
            <person name="Poole P.S."/>
            <person name="Mauchline T.H."/>
            <person name="East A.K."/>
            <person name="Quail M.A."/>
            <person name="Churcher C."/>
            <person name="Arrowsmith C."/>
            <person name="Cherevach I."/>
            <person name="Chillingworth T."/>
            <person name="Clarke K."/>
            <person name="Cronin A."/>
            <person name="Davis P."/>
            <person name="Fraser A."/>
            <person name="Hance Z."/>
            <person name="Hauser H."/>
            <person name="Jagels K."/>
            <person name="Moule S."/>
            <person name="Mungall K."/>
            <person name="Norbertczak H."/>
            <person name="Rabbinowitsch E."/>
            <person name="Sanders M."/>
            <person name="Simmonds M."/>
            <person name="Whitehead S."/>
            <person name="Parkhill J."/>
        </authorList>
    </citation>
    <scope>NUCLEOTIDE SEQUENCE [LARGE SCALE GENOMIC DNA]</scope>
    <source>
        <strain>DSM 114642 / LMG 32736 / 3841</strain>
    </source>
</reference>
<dbReference type="EMBL" id="AM236085">
    <property type="protein sequence ID" value="CAK03287.1"/>
    <property type="molecule type" value="Genomic_DNA"/>
</dbReference>
<dbReference type="RefSeq" id="WP_011655080.1">
    <property type="nucleotide sequence ID" value="NC_008384.1"/>
</dbReference>
<dbReference type="EnsemblBacteria" id="CAK03287">
    <property type="protein sequence ID" value="CAK03287"/>
    <property type="gene ID" value="pRL110337"/>
</dbReference>
<dbReference type="KEGG" id="rle:pRL110337"/>
<dbReference type="HOGENOM" id="CLU_008142_4_2_5"/>
<dbReference type="Proteomes" id="UP000006575">
    <property type="component" value="Plasmid pRL11"/>
</dbReference>
<dbReference type="GO" id="GO:0005886">
    <property type="term" value="C:plasma membrane"/>
    <property type="evidence" value="ECO:0007669"/>
    <property type="project" value="UniProtKB-SubCell"/>
</dbReference>
<dbReference type="GO" id="GO:0015079">
    <property type="term" value="F:potassium ion transmembrane transporter activity"/>
    <property type="evidence" value="ECO:0007669"/>
    <property type="project" value="UniProtKB-UniRule"/>
</dbReference>
<dbReference type="GO" id="GO:0015293">
    <property type="term" value="F:symporter activity"/>
    <property type="evidence" value="ECO:0007669"/>
    <property type="project" value="UniProtKB-UniRule"/>
</dbReference>
<dbReference type="HAMAP" id="MF_01522">
    <property type="entry name" value="Kup"/>
    <property type="match status" value="1"/>
</dbReference>
<dbReference type="InterPro" id="IPR003855">
    <property type="entry name" value="K+_transporter"/>
</dbReference>
<dbReference type="InterPro" id="IPR053952">
    <property type="entry name" value="K_trans_C"/>
</dbReference>
<dbReference type="InterPro" id="IPR053951">
    <property type="entry name" value="K_trans_N"/>
</dbReference>
<dbReference type="InterPro" id="IPR023051">
    <property type="entry name" value="Kup"/>
</dbReference>
<dbReference type="PANTHER" id="PTHR30540:SF79">
    <property type="entry name" value="LOW AFFINITY POTASSIUM TRANSPORT SYSTEM PROTEIN KUP"/>
    <property type="match status" value="1"/>
</dbReference>
<dbReference type="PANTHER" id="PTHR30540">
    <property type="entry name" value="OSMOTIC STRESS POTASSIUM TRANSPORTER"/>
    <property type="match status" value="1"/>
</dbReference>
<dbReference type="Pfam" id="PF02705">
    <property type="entry name" value="K_trans"/>
    <property type="match status" value="1"/>
</dbReference>
<dbReference type="Pfam" id="PF22776">
    <property type="entry name" value="K_trans_C"/>
    <property type="match status" value="1"/>
</dbReference>
<sequence length="633" mass="68206">MTDSKLRSADPELEHQTRQGLPSLVLAALGVVYGDIGTSPLYAFREALHATGGSGADRANVLGILSLIVWALTIVVTLKYVTFVLKADNRGEGGTLSLMTLAREGLTGRPKWVLVLGVIGASLFLGDAIITPAISVLSAVEGIEVVAPALSNWVVPITLTIIAVLFFVQRFGTSGVASVFGPVTALWFIVLGVSGAIHIFDDPSVLAAVNPVHALQYIANNIGSAIAVLGAVFLAVTGAEALYVDLGHFGRRPIVTAWFSLVFPSLLLNYFGQGAFVLANPEMAEHPFFSMHPEWARIPMVCLATAATVIASQAVISGAYSLVRQAMHLNLLPRLRILHTSETQSGQIFMPQVNNLLFIFVAALVLFFQNSSGLSAAYGIAVTGEMFITSILLFIVMRRIWSWKLTAALAVIVPITLIDAGFLAANIAKFAEGGWVPVAVASTMALIMQTWTAGRRLLAARTKADEIPLSAIIDNLARKKPPTVPGTAMFLTSDIEGAPTALLHSLKHYKVLHEQNVILSVVTSTTPFVPDDEKIFLESFNRHFSRLVITFGYMETPNIPRALVLARKLGLKFDIMSTSFFLSRRTILPSKKGGLPFWQDRLFISLAENASNATDYFGLPSGRVVELGLQTTI</sequence>
<evidence type="ECO:0000255" key="1">
    <source>
        <dbReference type="HAMAP-Rule" id="MF_01522"/>
    </source>
</evidence>
<accession>Q1M651</accession>
<gene>
    <name evidence="1" type="primary">kup3</name>
    <name type="ordered locus">pRL110337</name>
</gene>
<name>KUP3_RHIJ3</name>
<proteinExistence type="inferred from homology"/>
<geneLocation type="plasmid">
    <name>pRL11</name>
</geneLocation>
<organism>
    <name type="scientific">Rhizobium johnstonii (strain DSM 114642 / LMG 32736 / 3841)</name>
    <name type="common">Rhizobium leguminosarum bv. viciae</name>
    <dbReference type="NCBI Taxonomy" id="216596"/>
    <lineage>
        <taxon>Bacteria</taxon>
        <taxon>Pseudomonadati</taxon>
        <taxon>Pseudomonadota</taxon>
        <taxon>Alphaproteobacteria</taxon>
        <taxon>Hyphomicrobiales</taxon>
        <taxon>Rhizobiaceae</taxon>
        <taxon>Rhizobium/Agrobacterium group</taxon>
        <taxon>Rhizobium</taxon>
        <taxon>Rhizobium johnstonii</taxon>
    </lineage>
</organism>
<feature type="chain" id="PRO_0000279823" description="Probable potassium transport system protein Kup 3">
    <location>
        <begin position="1"/>
        <end position="633"/>
    </location>
</feature>
<feature type="transmembrane region" description="Helical" evidence="1">
    <location>
        <begin position="24"/>
        <end position="44"/>
    </location>
</feature>
<feature type="transmembrane region" description="Helical" evidence="1">
    <location>
        <begin position="61"/>
        <end position="81"/>
    </location>
</feature>
<feature type="transmembrane region" description="Helical" evidence="1">
    <location>
        <begin position="114"/>
        <end position="134"/>
    </location>
</feature>
<feature type="transmembrane region" description="Helical" evidence="1">
    <location>
        <begin position="148"/>
        <end position="168"/>
    </location>
</feature>
<feature type="transmembrane region" description="Helical" evidence="1">
    <location>
        <begin position="180"/>
        <end position="200"/>
    </location>
</feature>
<feature type="transmembrane region" description="Helical" evidence="1">
    <location>
        <begin position="222"/>
        <end position="242"/>
    </location>
</feature>
<feature type="transmembrane region" description="Helical" evidence="1">
    <location>
        <begin position="258"/>
        <end position="278"/>
    </location>
</feature>
<feature type="transmembrane region" description="Helical" evidence="1">
    <location>
        <begin position="298"/>
        <end position="318"/>
    </location>
</feature>
<feature type="transmembrane region" description="Helical" evidence="1">
    <location>
        <begin position="348"/>
        <end position="368"/>
    </location>
</feature>
<feature type="transmembrane region" description="Helical" evidence="1">
    <location>
        <begin position="377"/>
        <end position="397"/>
    </location>
</feature>
<feature type="transmembrane region" description="Helical" evidence="1">
    <location>
        <begin position="405"/>
        <end position="425"/>
    </location>
</feature>
<feature type="transmembrane region" description="Helical" evidence="1">
    <location>
        <begin position="427"/>
        <end position="447"/>
    </location>
</feature>
<comment type="function">
    <text evidence="1">Transport of potassium into the cell. Likely operates as a K(+):H(+) symporter.</text>
</comment>
<comment type="catalytic activity">
    <reaction evidence="1">
        <text>K(+)(in) + H(+)(in) = K(+)(out) + H(+)(out)</text>
        <dbReference type="Rhea" id="RHEA:28490"/>
        <dbReference type="ChEBI" id="CHEBI:15378"/>
        <dbReference type="ChEBI" id="CHEBI:29103"/>
    </reaction>
    <physiologicalReaction direction="right-to-left" evidence="1">
        <dbReference type="Rhea" id="RHEA:28492"/>
    </physiologicalReaction>
</comment>
<comment type="subcellular location">
    <subcellularLocation>
        <location evidence="1">Cell inner membrane</location>
        <topology evidence="1">Multi-pass membrane protein</topology>
    </subcellularLocation>
</comment>
<comment type="similarity">
    <text evidence="1">Belongs to the HAK/KUP transporter (TC 2.A.72) family.</text>
</comment>
<protein>
    <recommendedName>
        <fullName evidence="1">Probable potassium transport system protein Kup 3</fullName>
    </recommendedName>
</protein>